<accession>E7RAI2</accession>
<accession>W1QAR9</accession>
<proteinExistence type="inferred from homology"/>
<protein>
    <recommendedName>
        <fullName>High osmolarity signaling protein SHO1</fullName>
    </recommendedName>
    <alternativeName>
        <fullName>Osmosensor SHO1</fullName>
    </alternativeName>
</protein>
<evidence type="ECO:0000250" key="1"/>
<evidence type="ECO:0000255" key="2"/>
<evidence type="ECO:0000255" key="3">
    <source>
        <dbReference type="PROSITE-ProRule" id="PRU00192"/>
    </source>
</evidence>
<evidence type="ECO:0000305" key="4"/>
<gene>
    <name type="primary">SHO1</name>
    <name type="ORF">HPODL_05363</name>
</gene>
<name>SHO1_OGAPD</name>
<keyword id="KW-1003">Cell membrane</keyword>
<keyword id="KW-0472">Membrane</keyword>
<keyword id="KW-1185">Reference proteome</keyword>
<keyword id="KW-0728">SH3 domain</keyword>
<keyword id="KW-0346">Stress response</keyword>
<keyword id="KW-0812">Transmembrane</keyword>
<keyword id="KW-1133">Transmembrane helix</keyword>
<dbReference type="EMBL" id="AEOI02000010">
    <property type="protein sequence ID" value="ESW96460.1"/>
    <property type="molecule type" value="Genomic_DNA"/>
</dbReference>
<dbReference type="RefSeq" id="XP_013932890.1">
    <property type="nucleotide sequence ID" value="XM_014077415.1"/>
</dbReference>
<dbReference type="SMR" id="E7RAI2"/>
<dbReference type="STRING" id="871575.E7RAI2"/>
<dbReference type="GeneID" id="25774785"/>
<dbReference type="KEGG" id="opa:HPODL_05363"/>
<dbReference type="eggNOG" id="ENOG502QW7A">
    <property type="taxonomic scope" value="Eukaryota"/>
</dbReference>
<dbReference type="HOGENOM" id="CLU_043316_1_0_1"/>
<dbReference type="OMA" id="NIVWIFY"/>
<dbReference type="OrthoDB" id="5983572at2759"/>
<dbReference type="Proteomes" id="UP000008673">
    <property type="component" value="Chromosome VII"/>
</dbReference>
<dbReference type="GO" id="GO:0005886">
    <property type="term" value="C:plasma membrane"/>
    <property type="evidence" value="ECO:0007669"/>
    <property type="project" value="UniProtKB-SubCell"/>
</dbReference>
<dbReference type="CDD" id="cd11855">
    <property type="entry name" value="SH3_Sho1p"/>
    <property type="match status" value="1"/>
</dbReference>
<dbReference type="Gene3D" id="2.30.30.40">
    <property type="entry name" value="SH3 Domains"/>
    <property type="match status" value="1"/>
</dbReference>
<dbReference type="InterPro" id="IPR036028">
    <property type="entry name" value="SH3-like_dom_sf"/>
</dbReference>
<dbReference type="InterPro" id="IPR001452">
    <property type="entry name" value="SH3_domain"/>
</dbReference>
<dbReference type="InterPro" id="IPR035522">
    <property type="entry name" value="Sho1_SH3"/>
</dbReference>
<dbReference type="Pfam" id="PF00018">
    <property type="entry name" value="SH3_1"/>
    <property type="match status" value="1"/>
</dbReference>
<dbReference type="PRINTS" id="PR00452">
    <property type="entry name" value="SH3DOMAIN"/>
</dbReference>
<dbReference type="SMART" id="SM00326">
    <property type="entry name" value="SH3"/>
    <property type="match status" value="1"/>
</dbReference>
<dbReference type="SUPFAM" id="SSF50044">
    <property type="entry name" value="SH3-domain"/>
    <property type="match status" value="1"/>
</dbReference>
<dbReference type="PROSITE" id="PS50002">
    <property type="entry name" value="SH3"/>
    <property type="match status" value="1"/>
</dbReference>
<reference key="1">
    <citation type="journal article" date="2013" name="BMC Genomics">
        <title>Genome sequence and analysis of methylotrophic yeast Hansenula polymorpha DL1.</title>
        <authorList>
            <person name="Ravin N.V."/>
            <person name="Eldarov M.A."/>
            <person name="Kadnikov V.V."/>
            <person name="Beletsky A.V."/>
            <person name="Schneider J."/>
            <person name="Mardanova E.S."/>
            <person name="Smekalova E.M."/>
            <person name="Zvereva M.I."/>
            <person name="Dontsova O.A."/>
            <person name="Mardanov A.V."/>
            <person name="Skryabin K.G."/>
        </authorList>
    </citation>
    <scope>NUCLEOTIDE SEQUENCE [LARGE SCALE GENOMIC DNA]</scope>
    <source>
        <strain>ATCC 26012 / BCRC 20466 / JCM 22074 / NRRL Y-7560 / DL-1</strain>
    </source>
</reference>
<comment type="function">
    <text evidence="1">Plasma membrane osmosensor that activates the high osmolarity glycerol (HOG) MAPK signaling pathway in response to high osmolarity.</text>
</comment>
<comment type="subunit">
    <text evidence="1">Forms homooligomers.</text>
</comment>
<comment type="subcellular location">
    <subcellularLocation>
        <location evidence="1">Cell membrane</location>
        <topology evidence="1">Multi-pass membrane protein</topology>
    </subcellularLocation>
</comment>
<comment type="similarity">
    <text evidence="4">Belongs to the SHO1 family.</text>
</comment>
<organism>
    <name type="scientific">Ogataea parapolymorpha (strain ATCC 26012 / BCRC 20466 / JCM 22074 / NRRL Y-7560 / DL-1)</name>
    <name type="common">Yeast</name>
    <name type="synonym">Hansenula polymorpha</name>
    <dbReference type="NCBI Taxonomy" id="871575"/>
    <lineage>
        <taxon>Eukaryota</taxon>
        <taxon>Fungi</taxon>
        <taxon>Dikarya</taxon>
        <taxon>Ascomycota</taxon>
        <taxon>Saccharomycotina</taxon>
        <taxon>Pichiomycetes</taxon>
        <taxon>Pichiales</taxon>
        <taxon>Pichiaceae</taxon>
        <taxon>Ogataea</taxon>
    </lineage>
</organism>
<feature type="chain" id="PRO_0000410391" description="High osmolarity signaling protein SHO1">
    <location>
        <begin position="1"/>
        <end position="282"/>
    </location>
</feature>
<feature type="topological domain" description="Cytoplasmic" evidence="2">
    <location>
        <begin position="1"/>
        <end position="12"/>
    </location>
</feature>
<feature type="transmembrane region" description="Helical" evidence="2">
    <location>
        <begin position="13"/>
        <end position="33"/>
    </location>
</feature>
<feature type="topological domain" description="Extracellular" evidence="2">
    <location>
        <begin position="34"/>
        <end position="44"/>
    </location>
</feature>
<feature type="transmembrane region" description="Helical" evidence="2">
    <location>
        <begin position="45"/>
        <end position="65"/>
    </location>
</feature>
<feature type="topological domain" description="Cytoplasmic" evidence="2">
    <location>
        <begin position="66"/>
        <end position="73"/>
    </location>
</feature>
<feature type="transmembrane region" description="Helical" evidence="2">
    <location>
        <begin position="74"/>
        <end position="96"/>
    </location>
</feature>
<feature type="topological domain" description="Extracellular" evidence="2">
    <location>
        <begin position="97"/>
        <end position="102"/>
    </location>
</feature>
<feature type="transmembrane region" description="Helical" evidence="2">
    <location>
        <begin position="103"/>
        <end position="123"/>
    </location>
</feature>
<feature type="topological domain" description="Cytoplasmic" evidence="2">
    <location>
        <begin position="124"/>
        <end position="282"/>
    </location>
</feature>
<feature type="domain" description="SH3" evidence="3">
    <location>
        <begin position="222"/>
        <end position="282"/>
    </location>
</feature>
<sequence length="282" mass="31136">MGRSNPVSLFNPFALSTFGFSSIGWIITFAGCIATNTQNNGFPKFAWWAVVFQLLLLIVIVVLYITNTFHYHRFFLTCAIGVAFVYNSNATNNLVYDTSSAPAAASAGFIIQCIVNILWLFYFGSEPSSPIISYIDSFGSSENVMLSSKRSKSNRNAAGQSQIPLDEPYKDETMGYAERNSVSNDNSGLHENPFNTQNYTAQLSGLENASTTNRASALPEDDYPITVRGLFDYDASPDDINELSFKKGDIFRVKDTVGNWWQGKNSKGEIGMCPSNYLEVIG</sequence>